<comment type="function">
    <text evidence="1">Catalyzes the reversible phosphorylation of UMP to UDP.</text>
</comment>
<comment type="catalytic activity">
    <reaction evidence="1">
        <text>UMP + ATP = UDP + ADP</text>
        <dbReference type="Rhea" id="RHEA:24400"/>
        <dbReference type="ChEBI" id="CHEBI:30616"/>
        <dbReference type="ChEBI" id="CHEBI:57865"/>
        <dbReference type="ChEBI" id="CHEBI:58223"/>
        <dbReference type="ChEBI" id="CHEBI:456216"/>
        <dbReference type="EC" id="2.7.4.22"/>
    </reaction>
</comment>
<comment type="activity regulation">
    <text evidence="1">Inhibited by UTP.</text>
</comment>
<comment type="pathway">
    <text evidence="1">Pyrimidine metabolism; CTP biosynthesis via de novo pathway; UDP from UMP (UMPK route): step 1/1.</text>
</comment>
<comment type="subunit">
    <text evidence="1">Homohexamer.</text>
</comment>
<comment type="subcellular location">
    <subcellularLocation>
        <location evidence="1">Cytoplasm</location>
    </subcellularLocation>
</comment>
<comment type="similarity">
    <text evidence="1">Belongs to the UMP kinase family.</text>
</comment>
<gene>
    <name evidence="1" type="primary">pyrH</name>
    <name type="ordered locus">P9215_06031</name>
</gene>
<keyword id="KW-0067">ATP-binding</keyword>
<keyword id="KW-0963">Cytoplasm</keyword>
<keyword id="KW-0418">Kinase</keyword>
<keyword id="KW-0547">Nucleotide-binding</keyword>
<keyword id="KW-0665">Pyrimidine biosynthesis</keyword>
<keyword id="KW-0808">Transferase</keyword>
<dbReference type="EC" id="2.7.4.22" evidence="1"/>
<dbReference type="EMBL" id="CP000825">
    <property type="protein sequence ID" value="ABV50218.1"/>
    <property type="molecule type" value="Genomic_DNA"/>
</dbReference>
<dbReference type="RefSeq" id="WP_002805268.1">
    <property type="nucleotide sequence ID" value="NC_009840.1"/>
</dbReference>
<dbReference type="SMR" id="A8G3N7"/>
<dbReference type="STRING" id="93060.P9215_06031"/>
<dbReference type="KEGG" id="pmh:P9215_06031"/>
<dbReference type="eggNOG" id="COG0528">
    <property type="taxonomic scope" value="Bacteria"/>
</dbReference>
<dbReference type="HOGENOM" id="CLU_033861_0_0_3"/>
<dbReference type="OrthoDB" id="9807458at2"/>
<dbReference type="UniPathway" id="UPA00159">
    <property type="reaction ID" value="UER00275"/>
</dbReference>
<dbReference type="Proteomes" id="UP000002014">
    <property type="component" value="Chromosome"/>
</dbReference>
<dbReference type="GO" id="GO:0005737">
    <property type="term" value="C:cytoplasm"/>
    <property type="evidence" value="ECO:0007669"/>
    <property type="project" value="UniProtKB-SubCell"/>
</dbReference>
<dbReference type="GO" id="GO:0005524">
    <property type="term" value="F:ATP binding"/>
    <property type="evidence" value="ECO:0007669"/>
    <property type="project" value="UniProtKB-KW"/>
</dbReference>
<dbReference type="GO" id="GO:0033862">
    <property type="term" value="F:UMP kinase activity"/>
    <property type="evidence" value="ECO:0007669"/>
    <property type="project" value="UniProtKB-EC"/>
</dbReference>
<dbReference type="GO" id="GO:0044210">
    <property type="term" value="P:'de novo' CTP biosynthetic process"/>
    <property type="evidence" value="ECO:0007669"/>
    <property type="project" value="UniProtKB-UniRule"/>
</dbReference>
<dbReference type="GO" id="GO:0006225">
    <property type="term" value="P:UDP biosynthetic process"/>
    <property type="evidence" value="ECO:0007669"/>
    <property type="project" value="TreeGrafter"/>
</dbReference>
<dbReference type="CDD" id="cd04254">
    <property type="entry name" value="AAK_UMPK-PyrH-Ec"/>
    <property type="match status" value="1"/>
</dbReference>
<dbReference type="FunFam" id="3.40.1160.10:FF:000001">
    <property type="entry name" value="Uridylate kinase"/>
    <property type="match status" value="1"/>
</dbReference>
<dbReference type="Gene3D" id="3.40.1160.10">
    <property type="entry name" value="Acetylglutamate kinase-like"/>
    <property type="match status" value="1"/>
</dbReference>
<dbReference type="HAMAP" id="MF_01220_B">
    <property type="entry name" value="PyrH_B"/>
    <property type="match status" value="1"/>
</dbReference>
<dbReference type="InterPro" id="IPR036393">
    <property type="entry name" value="AceGlu_kinase-like_sf"/>
</dbReference>
<dbReference type="InterPro" id="IPR001048">
    <property type="entry name" value="Asp/Glu/Uridylate_kinase"/>
</dbReference>
<dbReference type="InterPro" id="IPR011817">
    <property type="entry name" value="Uridylate_kinase"/>
</dbReference>
<dbReference type="InterPro" id="IPR015963">
    <property type="entry name" value="Uridylate_kinase_bac"/>
</dbReference>
<dbReference type="NCBIfam" id="TIGR02075">
    <property type="entry name" value="pyrH_bact"/>
    <property type="match status" value="1"/>
</dbReference>
<dbReference type="PANTHER" id="PTHR42833">
    <property type="entry name" value="URIDYLATE KINASE"/>
    <property type="match status" value="1"/>
</dbReference>
<dbReference type="PANTHER" id="PTHR42833:SF4">
    <property type="entry name" value="URIDYLATE KINASE PUMPKIN, CHLOROPLASTIC"/>
    <property type="match status" value="1"/>
</dbReference>
<dbReference type="Pfam" id="PF00696">
    <property type="entry name" value="AA_kinase"/>
    <property type="match status" value="1"/>
</dbReference>
<dbReference type="PIRSF" id="PIRSF005650">
    <property type="entry name" value="Uridylate_kin"/>
    <property type="match status" value="1"/>
</dbReference>
<dbReference type="SUPFAM" id="SSF53633">
    <property type="entry name" value="Carbamate kinase-like"/>
    <property type="match status" value="1"/>
</dbReference>
<name>PYRH_PROM2</name>
<feature type="chain" id="PRO_0000323918" description="Uridylate kinase">
    <location>
        <begin position="1"/>
        <end position="234"/>
    </location>
</feature>
<feature type="binding site" evidence="1">
    <location>
        <begin position="9"/>
        <end position="12"/>
    </location>
    <ligand>
        <name>ATP</name>
        <dbReference type="ChEBI" id="CHEBI:30616"/>
    </ligand>
</feature>
<feature type="binding site" evidence="1">
    <location>
        <position position="51"/>
    </location>
    <ligand>
        <name>UMP</name>
        <dbReference type="ChEBI" id="CHEBI:57865"/>
    </ligand>
</feature>
<feature type="binding site" evidence="1">
    <location>
        <position position="52"/>
    </location>
    <ligand>
        <name>ATP</name>
        <dbReference type="ChEBI" id="CHEBI:30616"/>
    </ligand>
</feature>
<feature type="binding site" evidence="1">
    <location>
        <position position="56"/>
    </location>
    <ligand>
        <name>ATP</name>
        <dbReference type="ChEBI" id="CHEBI:30616"/>
    </ligand>
</feature>
<feature type="binding site" evidence="1">
    <location>
        <position position="71"/>
    </location>
    <ligand>
        <name>UMP</name>
        <dbReference type="ChEBI" id="CHEBI:57865"/>
    </ligand>
</feature>
<feature type="binding site" evidence="1">
    <location>
        <begin position="132"/>
        <end position="139"/>
    </location>
    <ligand>
        <name>UMP</name>
        <dbReference type="ChEBI" id="CHEBI:57865"/>
    </ligand>
</feature>
<feature type="binding site" evidence="1">
    <location>
        <position position="159"/>
    </location>
    <ligand>
        <name>ATP</name>
        <dbReference type="ChEBI" id="CHEBI:30616"/>
    </ligand>
</feature>
<feature type="binding site" evidence="1">
    <location>
        <position position="165"/>
    </location>
    <ligand>
        <name>ATP</name>
        <dbReference type="ChEBI" id="CHEBI:30616"/>
    </ligand>
</feature>
<feature type="binding site" evidence="1">
    <location>
        <position position="168"/>
    </location>
    <ligand>
        <name>ATP</name>
        <dbReference type="ChEBI" id="CHEBI:30616"/>
    </ligand>
</feature>
<protein>
    <recommendedName>
        <fullName evidence="1">Uridylate kinase</fullName>
        <shortName evidence="1">UK</shortName>
        <ecNumber evidence="1">2.7.4.22</ecNumber>
    </recommendedName>
    <alternativeName>
        <fullName evidence="1">Uridine monophosphate kinase</fullName>
        <shortName evidence="1">UMP kinase</shortName>
        <shortName evidence="1">UMPK</shortName>
    </alternativeName>
</protein>
<organism>
    <name type="scientific">Prochlorococcus marinus (strain MIT 9215)</name>
    <dbReference type="NCBI Taxonomy" id="93060"/>
    <lineage>
        <taxon>Bacteria</taxon>
        <taxon>Bacillati</taxon>
        <taxon>Cyanobacteriota</taxon>
        <taxon>Cyanophyceae</taxon>
        <taxon>Synechococcales</taxon>
        <taxon>Prochlorococcaceae</taxon>
        <taxon>Prochlorococcus</taxon>
    </lineage>
</organism>
<proteinExistence type="inferred from homology"/>
<evidence type="ECO:0000255" key="1">
    <source>
        <dbReference type="HAMAP-Rule" id="MF_01220"/>
    </source>
</evidence>
<accession>A8G3N7</accession>
<sequence>MTYKRVLLKLSGEALMGEKPYGIDPAIVQSIAEDVLKVVEKNVQLAIVVGGGNIFRGLKGSADGMDRATADYVGMLATVMNAISLQDGLERVGVATRVQTAIEMQEIAEPYIRRRAMRHLEKGRVVVFGGGCGNPFFTTDTTAALRAAEINAEVVMKATKVDGVYDCDPNQFKDAKKYSSLSYQRVLSDEIAVMDSTAIALCKDNNIPIMVFDIFKKGNISKAVAGEPIGSLIS</sequence>
<reference key="1">
    <citation type="journal article" date="2007" name="PLoS Genet.">
        <title>Patterns and implications of gene gain and loss in the evolution of Prochlorococcus.</title>
        <authorList>
            <person name="Kettler G.C."/>
            <person name="Martiny A.C."/>
            <person name="Huang K."/>
            <person name="Zucker J."/>
            <person name="Coleman M.L."/>
            <person name="Rodrigue S."/>
            <person name="Chen F."/>
            <person name="Lapidus A."/>
            <person name="Ferriera S."/>
            <person name="Johnson J."/>
            <person name="Steglich C."/>
            <person name="Church G.M."/>
            <person name="Richardson P."/>
            <person name="Chisholm S.W."/>
        </authorList>
    </citation>
    <scope>NUCLEOTIDE SEQUENCE [LARGE SCALE GENOMIC DNA]</scope>
    <source>
        <strain>MIT 9215</strain>
    </source>
</reference>